<organism>
    <name type="scientific">Rattus norvegicus</name>
    <name type="common">Rat</name>
    <dbReference type="NCBI Taxonomy" id="10116"/>
    <lineage>
        <taxon>Eukaryota</taxon>
        <taxon>Metazoa</taxon>
        <taxon>Chordata</taxon>
        <taxon>Craniata</taxon>
        <taxon>Vertebrata</taxon>
        <taxon>Euteleostomi</taxon>
        <taxon>Mammalia</taxon>
        <taxon>Eutheria</taxon>
        <taxon>Euarchontoglires</taxon>
        <taxon>Glires</taxon>
        <taxon>Rodentia</taxon>
        <taxon>Myomorpha</taxon>
        <taxon>Muroidea</taxon>
        <taxon>Muridae</taxon>
        <taxon>Murinae</taxon>
        <taxon>Rattus</taxon>
    </lineage>
</organism>
<feature type="initiator methionine" description="Removed" evidence="2">
    <location>
        <position position="1"/>
    </location>
</feature>
<feature type="chain" id="PRO_0000158546" description="Acylphosphatase-2">
    <location>
        <begin position="2"/>
        <end position="97"/>
    </location>
</feature>
<feature type="domain" description="Acylphosphatase-like" evidence="1">
    <location>
        <begin position="7"/>
        <end position="97"/>
    </location>
</feature>
<feature type="active site" evidence="1">
    <location>
        <position position="22"/>
    </location>
</feature>
<feature type="active site" evidence="1">
    <location>
        <position position="40"/>
    </location>
</feature>
<feature type="modified residue" description="N-acetylalanine" evidence="2">
    <location>
        <position position="2"/>
    </location>
</feature>
<feature type="modified residue" description="Phosphoserine" evidence="4">
    <location>
        <position position="91"/>
    </location>
</feature>
<proteinExistence type="evidence at protein level"/>
<reference key="1">
    <citation type="journal article" date="1991" name="J. Protein Chem.">
        <title>Rat muscle acylphosphatase: purification, amino sequence, and immunological characterization.</title>
        <authorList>
            <person name="Berti A."/>
            <person name="Tremori E."/>
            <person name="Pazzagli L."/>
            <person name="Degl'Innocenti D."/>
            <person name="Camici G."/>
            <person name="Cappugi G."/>
            <person name="Manoa G."/>
            <person name="Ramponi G."/>
        </authorList>
    </citation>
    <scope>PROTEIN SEQUENCE OF 2-97</scope>
    <scope>CLEAVAGE OF INITIATOR METHIONINE</scope>
    <scope>ACETYLATION AT ALA-2</scope>
    <source>
        <tissue>Skeletal muscle</tissue>
    </source>
</reference>
<reference key="2">
    <citation type="submission" date="2007-07" db="UniProtKB">
        <authorList>
            <person name="Lubec G."/>
            <person name="Kang S.U."/>
        </authorList>
    </citation>
    <scope>PROTEIN SEQUENCE OF 44-56</scope>
    <scope>IDENTIFICATION BY MASS SPECTROMETRY</scope>
    <source>
        <strain>Sprague-Dawley</strain>
        <tissue>Brain</tissue>
    </source>
</reference>
<reference key="3">
    <citation type="journal article" date="2012" name="Nat. Commun.">
        <title>Quantitative maps of protein phosphorylation sites across 14 different rat organs and tissues.</title>
        <authorList>
            <person name="Lundby A."/>
            <person name="Secher A."/>
            <person name="Lage K."/>
            <person name="Nordsborg N.B."/>
            <person name="Dmytriyev A."/>
            <person name="Lundby C."/>
            <person name="Olsen J.V."/>
        </authorList>
    </citation>
    <scope>PHOSPHORYLATION [LARGE SCALE ANALYSIS] AT SER-91</scope>
    <scope>IDENTIFICATION BY MASS SPECTROMETRY [LARGE SCALE ANALYSIS]</scope>
</reference>
<accession>P35745</accession>
<gene>
    <name type="primary">Acyp2</name>
    <name type="synonym">Acyp</name>
</gene>
<comment type="function">
    <text>Its physiological role is not yet clear.</text>
</comment>
<comment type="catalytic activity">
    <reaction>
        <text>an acyl phosphate + H2O = a carboxylate + phosphate + H(+)</text>
        <dbReference type="Rhea" id="RHEA:14965"/>
        <dbReference type="ChEBI" id="CHEBI:15377"/>
        <dbReference type="ChEBI" id="CHEBI:15378"/>
        <dbReference type="ChEBI" id="CHEBI:29067"/>
        <dbReference type="ChEBI" id="CHEBI:43474"/>
        <dbReference type="ChEBI" id="CHEBI:59918"/>
        <dbReference type="EC" id="3.6.1.7"/>
    </reaction>
</comment>
<comment type="similarity">
    <text evidence="3">Belongs to the acylphosphatase family.</text>
</comment>
<name>ACYP2_RAT</name>
<dbReference type="EC" id="3.6.1.7"/>
<dbReference type="PIR" id="A61427">
    <property type="entry name" value="A61427"/>
</dbReference>
<dbReference type="SMR" id="P35745"/>
<dbReference type="FunCoup" id="P35745">
    <property type="interactions" value="807"/>
</dbReference>
<dbReference type="STRING" id="10116.ENSRNOP00000061028"/>
<dbReference type="iPTMnet" id="P35745"/>
<dbReference type="PhosphoSitePlus" id="P35745"/>
<dbReference type="PaxDb" id="10116-ENSRNOP00000061028"/>
<dbReference type="AGR" id="RGD:1595836"/>
<dbReference type="RGD" id="1595836">
    <property type="gene designation" value="Acyp2"/>
</dbReference>
<dbReference type="eggNOG" id="KOG3360">
    <property type="taxonomic scope" value="Eukaryota"/>
</dbReference>
<dbReference type="InParanoid" id="P35745"/>
<dbReference type="PhylomeDB" id="P35745"/>
<dbReference type="PRO" id="PR:P35745"/>
<dbReference type="Proteomes" id="UP000002494">
    <property type="component" value="Unplaced"/>
</dbReference>
<dbReference type="GO" id="GO:0003998">
    <property type="term" value="F:acylphosphatase activity"/>
    <property type="evidence" value="ECO:0000318"/>
    <property type="project" value="GO_Central"/>
</dbReference>
<dbReference type="GO" id="GO:0042802">
    <property type="term" value="F:identical protein binding"/>
    <property type="evidence" value="ECO:0000266"/>
    <property type="project" value="RGD"/>
</dbReference>
<dbReference type="FunFam" id="3.30.70.100:FF:000011">
    <property type="entry name" value="Acylphosphatase"/>
    <property type="match status" value="1"/>
</dbReference>
<dbReference type="Gene3D" id="3.30.70.100">
    <property type="match status" value="1"/>
</dbReference>
<dbReference type="InterPro" id="IPR020456">
    <property type="entry name" value="Acylphosphatase"/>
</dbReference>
<dbReference type="InterPro" id="IPR001792">
    <property type="entry name" value="Acylphosphatase-like_dom"/>
</dbReference>
<dbReference type="InterPro" id="IPR036046">
    <property type="entry name" value="Acylphosphatase-like_dom_sf"/>
</dbReference>
<dbReference type="InterPro" id="IPR017968">
    <property type="entry name" value="Acylphosphatase_CS"/>
</dbReference>
<dbReference type="PANTHER" id="PTHR10029">
    <property type="entry name" value="ACYLPHOSPHATASE"/>
    <property type="match status" value="1"/>
</dbReference>
<dbReference type="PANTHER" id="PTHR10029:SF20">
    <property type="entry name" value="ACYLPHOSPHATASE-2"/>
    <property type="match status" value="1"/>
</dbReference>
<dbReference type="Pfam" id="PF00708">
    <property type="entry name" value="Acylphosphatase"/>
    <property type="match status" value="1"/>
</dbReference>
<dbReference type="PRINTS" id="PR00112">
    <property type="entry name" value="ACYLPHPHTASE"/>
</dbReference>
<dbReference type="SUPFAM" id="SSF54975">
    <property type="entry name" value="Acylphosphatase/BLUF domain-like"/>
    <property type="match status" value="1"/>
</dbReference>
<dbReference type="PROSITE" id="PS00150">
    <property type="entry name" value="ACYLPHOSPHATASE_1"/>
    <property type="match status" value="1"/>
</dbReference>
<dbReference type="PROSITE" id="PS00151">
    <property type="entry name" value="ACYLPHOSPHATASE_2"/>
    <property type="match status" value="1"/>
</dbReference>
<dbReference type="PROSITE" id="PS51160">
    <property type="entry name" value="ACYLPHOSPHATASE_3"/>
    <property type="match status" value="1"/>
</dbReference>
<evidence type="ECO:0000255" key="1">
    <source>
        <dbReference type="PROSITE-ProRule" id="PRU00520"/>
    </source>
</evidence>
<evidence type="ECO:0000269" key="2">
    <source>
    </source>
</evidence>
<evidence type="ECO:0000305" key="3"/>
<evidence type="ECO:0007744" key="4">
    <source>
    </source>
</evidence>
<keyword id="KW-0007">Acetylation</keyword>
<keyword id="KW-0903">Direct protein sequencing</keyword>
<keyword id="KW-0378">Hydrolase</keyword>
<keyword id="KW-0597">Phosphoprotein</keyword>
<keyword id="KW-1185">Reference proteome</keyword>
<protein>
    <recommendedName>
        <fullName>Acylphosphatase-2</fullName>
        <ecNumber>3.6.1.7</ecNumber>
    </recommendedName>
    <alternativeName>
        <fullName>Acylphosphatase, muscle type isozyme</fullName>
    </alternativeName>
    <alternativeName>
        <fullName>Acylphosphate phosphohydrolase 2</fullName>
    </alternativeName>
</protein>
<sequence length="97" mass="10863">MAEPLKSVDYEVFGTVQGVCFRMYTEGEAKKRGLVGWVKNTSKGTVTGQVQGPEEKVNSMKSWLSKVGSPSSRIDRADFSNEKTISKLEYSNFSIRY</sequence>